<accession>Q4R347</accession>
<protein>
    <recommendedName>
        <fullName evidence="2">CCR4-NOT transcription complex subunit 9</fullName>
    </recommendedName>
    <alternativeName>
        <fullName>Cell differentiation protein RQCD1 homolog</fullName>
        <shortName>Rcd-1</shortName>
    </alternativeName>
</protein>
<organism>
    <name type="scientific">Macaca fascicularis</name>
    <name type="common">Crab-eating macaque</name>
    <name type="synonym">Cynomolgus monkey</name>
    <dbReference type="NCBI Taxonomy" id="9541"/>
    <lineage>
        <taxon>Eukaryota</taxon>
        <taxon>Metazoa</taxon>
        <taxon>Chordata</taxon>
        <taxon>Craniata</taxon>
        <taxon>Vertebrata</taxon>
        <taxon>Euteleostomi</taxon>
        <taxon>Mammalia</taxon>
        <taxon>Eutheria</taxon>
        <taxon>Euarchontoglires</taxon>
        <taxon>Primates</taxon>
        <taxon>Haplorrhini</taxon>
        <taxon>Catarrhini</taxon>
        <taxon>Cercopithecidae</taxon>
        <taxon>Cercopithecinae</taxon>
        <taxon>Macaca</taxon>
    </lineage>
</organism>
<gene>
    <name evidence="2" type="primary">CNOT9</name>
    <name type="synonym">RCD1</name>
    <name type="synonym">RQCD1</name>
    <name type="ORF">QtsA-19705</name>
</gene>
<keyword id="KW-0007">Acetylation</keyword>
<keyword id="KW-0010">Activator</keyword>
<keyword id="KW-0963">Cytoplasm</keyword>
<keyword id="KW-0539">Nucleus</keyword>
<keyword id="KW-1185">Reference proteome</keyword>
<keyword id="KW-0678">Repressor</keyword>
<keyword id="KW-0943">RNA-mediated gene silencing</keyword>
<keyword id="KW-0804">Transcription</keyword>
<keyword id="KW-0805">Transcription regulation</keyword>
<keyword id="KW-0810">Translation regulation</keyword>
<name>CNOT9_MACFA</name>
<dbReference type="EMBL" id="AB179421">
    <property type="protein sequence ID" value="BAE02472.1"/>
    <property type="molecule type" value="mRNA"/>
</dbReference>
<dbReference type="RefSeq" id="NP_001270704.1">
    <property type="nucleotide sequence ID" value="NM_001283775.1"/>
</dbReference>
<dbReference type="RefSeq" id="XP_045223648.1">
    <property type="nucleotide sequence ID" value="XM_045367713.2"/>
</dbReference>
<dbReference type="SMR" id="Q4R347"/>
<dbReference type="STRING" id="9541.ENSMFAP00000000907"/>
<dbReference type="GeneID" id="101866077"/>
<dbReference type="eggNOG" id="KOG3036">
    <property type="taxonomic scope" value="Eukaryota"/>
</dbReference>
<dbReference type="Proteomes" id="UP000233100">
    <property type="component" value="Unplaced"/>
</dbReference>
<dbReference type="GO" id="GO:0030014">
    <property type="term" value="C:CCR4-NOT complex"/>
    <property type="evidence" value="ECO:0000250"/>
    <property type="project" value="UniProtKB"/>
</dbReference>
<dbReference type="GO" id="GO:0005634">
    <property type="term" value="C:nucleus"/>
    <property type="evidence" value="ECO:0007669"/>
    <property type="project" value="UniProtKB-SubCell"/>
</dbReference>
<dbReference type="GO" id="GO:0000932">
    <property type="term" value="C:P-body"/>
    <property type="evidence" value="ECO:0000250"/>
    <property type="project" value="UniProtKB"/>
</dbReference>
<dbReference type="GO" id="GO:0003713">
    <property type="term" value="F:transcription coactivator activity"/>
    <property type="evidence" value="ECO:0000250"/>
    <property type="project" value="UniProtKB"/>
</dbReference>
<dbReference type="GO" id="GO:0006402">
    <property type="term" value="P:mRNA catabolic process"/>
    <property type="evidence" value="ECO:0007669"/>
    <property type="project" value="InterPro"/>
</dbReference>
<dbReference type="GO" id="GO:0033147">
    <property type="term" value="P:negative regulation of intracellular estrogen receptor signaling pathway"/>
    <property type="evidence" value="ECO:0000250"/>
    <property type="project" value="UniProtKB"/>
</dbReference>
<dbReference type="GO" id="GO:0006417">
    <property type="term" value="P:regulation of translation"/>
    <property type="evidence" value="ECO:0007669"/>
    <property type="project" value="UniProtKB-KW"/>
</dbReference>
<dbReference type="GO" id="GO:0031047">
    <property type="term" value="P:regulatory ncRNA-mediated gene silencing"/>
    <property type="evidence" value="ECO:0007669"/>
    <property type="project" value="UniProtKB-KW"/>
</dbReference>
<dbReference type="FunFam" id="1.25.10.10:FF:000037">
    <property type="entry name" value="CCR4-NOT transcription complex subunit 9"/>
    <property type="match status" value="1"/>
</dbReference>
<dbReference type="Gene3D" id="1.25.10.10">
    <property type="entry name" value="Leucine-rich Repeat Variant"/>
    <property type="match status" value="1"/>
</dbReference>
<dbReference type="InterPro" id="IPR011989">
    <property type="entry name" value="ARM-like"/>
</dbReference>
<dbReference type="InterPro" id="IPR016024">
    <property type="entry name" value="ARM-type_fold"/>
</dbReference>
<dbReference type="InterPro" id="IPR007216">
    <property type="entry name" value="CNOT9"/>
</dbReference>
<dbReference type="PANTHER" id="PTHR12262">
    <property type="entry name" value="CCR4-NOT TRANSCRIPTION COMPLEX SUBUNIT 9"/>
    <property type="match status" value="1"/>
</dbReference>
<dbReference type="Pfam" id="PF04078">
    <property type="entry name" value="Rcd1"/>
    <property type="match status" value="1"/>
</dbReference>
<dbReference type="SUPFAM" id="SSF48371">
    <property type="entry name" value="ARM repeat"/>
    <property type="match status" value="1"/>
</dbReference>
<proteinExistence type="evidence at transcript level"/>
<comment type="function">
    <text evidence="3">Component of the CCR4-NOT complex which is one of the major cellular mRNA deadenylases and is linked to various cellular processes including bulk mRNA degradation, miRNA-mediated repression, translational repression during translational initiation and general transcription regulation. Additional complex functions may be a consequence of its influence on mRNA expression. Involved in down-regulation of MYB- and JUN-dependent transcription. Enhances ligand-dependent transcriptional activity of nuclear hormone receptors. May play a role in cell differentiation.</text>
</comment>
<comment type="subunit">
    <text evidence="1">Homodimer. Component of the CCR4-NOT complex; distinct complexes seem to exist that differ in the participation of probably mutually exclusive catalytic subunits. Interacts with MYB, ATF2, RARA, RARB, RARG, RXRA, RXRB and RXRG. Identified in a complex with ATF2 bound to target DNA. Interacts with NANOS2. Directly interacts with ZNF335 (By similarity).</text>
</comment>
<comment type="subcellular location">
    <subcellularLocation>
        <location evidence="3">Nucleus</location>
    </subcellularLocation>
    <subcellularLocation>
        <location evidence="3">Cytoplasm</location>
        <location evidence="3">P-body</location>
    </subcellularLocation>
    <text evidence="3">NANOS2 promotes its localization to P-body.</text>
</comment>
<comment type="similarity">
    <text evidence="4">Belongs to the CNOT9 family.</text>
</comment>
<feature type="chain" id="PRO_0000327226" description="CCR4-NOT transcription complex subunit 9">
    <location>
        <begin position="1"/>
        <end position="299"/>
    </location>
</feature>
<feature type="modified residue" description="N-acetylmethionine" evidence="2">
    <location>
        <position position="1"/>
    </location>
</feature>
<reference key="1">
    <citation type="submission" date="2005-06" db="EMBL/GenBank/DDBJ databases">
        <title>DNA sequences of macaque genes expressed in brain or testis and its evolutionary implications.</title>
        <authorList>
            <consortium name="International consortium for macaque cDNA sequencing and analysis"/>
        </authorList>
    </citation>
    <scope>NUCLEOTIDE SEQUENCE [LARGE SCALE MRNA]</scope>
    <source>
        <tissue>Testis</tissue>
    </source>
</reference>
<sequence length="299" mass="33601">MHSLATAAPVPTALAQVDREKIYQWINELSSPETRENALLELSKKRESVPDLAPMLWHSFGTIAALLQEIVNIYPSINPPTLTAHQSNRVCNALALLQCVASHPETRSAFLAAHIPLFLYPFLHTVSKTRPFEYLRLTSLGVIGALVKTDEQEVINFLLTTEIIPLCLRIMESGSELSKTVATFILQKILLDDTGLAYICQTYERFSHVAMILGKMVLQLSKEPSARLLKHVVRCYLRLSDNPRAREALRQCLPDQLKDTTFAQVLKDDTTTKRWLAQLVKNLQEGQVTDPRGIPLPPQ</sequence>
<evidence type="ECO:0000250" key="1"/>
<evidence type="ECO:0000250" key="2">
    <source>
        <dbReference type="UniProtKB" id="Q92600"/>
    </source>
</evidence>
<evidence type="ECO:0000250" key="3">
    <source>
        <dbReference type="UniProtKB" id="Q9JKY0"/>
    </source>
</evidence>
<evidence type="ECO:0000305" key="4"/>